<protein>
    <recommendedName>
        <fullName evidence="12">Phenoloxidase-activating enzyme</fullName>
        <ecNumber evidence="6 7 8 9">3.4.21.-</ecNumber>
    </recommendedName>
    <alternativeName>
        <fullName evidence="11">Prophenoloxidase-activating enzyme</fullName>
    </alternativeName>
    <component>
        <recommendedName>
            <fullName evidence="10">Phenoloxidase-activating enzyme light chain</fullName>
        </recommendedName>
    </component>
    <component>
        <recommendedName>
            <fullName evidence="10">Phenoloxidase-activating enzyme heavy chain</fullName>
        </recommendedName>
    </component>
</protein>
<dbReference type="EC" id="3.4.21.-" evidence="6 7 8 9"/>
<dbReference type="EMBL" id="AB009670">
    <property type="protein sequence ID" value="BAA76308.1"/>
    <property type="molecule type" value="mRNA"/>
</dbReference>
<dbReference type="EMBL" id="BABH01025554">
    <property type="status" value="NOT_ANNOTATED_CDS"/>
    <property type="molecule type" value="Genomic_DNA"/>
</dbReference>
<dbReference type="RefSeq" id="NP_001036832.1">
    <property type="nucleotide sequence ID" value="NM_001043367.1"/>
</dbReference>
<dbReference type="SMR" id="Q9XXV0"/>
<dbReference type="STRING" id="7091.Q9XXV0"/>
<dbReference type="MEROPS" id="S01.305"/>
<dbReference type="GlyCosmos" id="Q9XXV0">
    <property type="glycosylation" value="2 sites, No reported glycans"/>
</dbReference>
<dbReference type="PaxDb" id="7091-BGIBMGA013746-TA"/>
<dbReference type="GeneID" id="692368"/>
<dbReference type="KEGG" id="bmor:692368"/>
<dbReference type="CTD" id="692368"/>
<dbReference type="eggNOG" id="KOG3627">
    <property type="taxonomic scope" value="Eukaryota"/>
</dbReference>
<dbReference type="HOGENOM" id="CLU_006842_0_3_1"/>
<dbReference type="InParanoid" id="Q9XXV0"/>
<dbReference type="OrthoDB" id="582692at7088"/>
<dbReference type="Proteomes" id="UP000005204">
    <property type="component" value="Unassembled WGS sequence"/>
</dbReference>
<dbReference type="GO" id="GO:0004175">
    <property type="term" value="F:endopeptidase activity"/>
    <property type="evidence" value="ECO:0000314"/>
    <property type="project" value="UniProtKB"/>
</dbReference>
<dbReference type="GO" id="GO:0046872">
    <property type="term" value="F:metal ion binding"/>
    <property type="evidence" value="ECO:0007669"/>
    <property type="project" value="UniProtKB-KW"/>
</dbReference>
<dbReference type="GO" id="GO:0008233">
    <property type="term" value="F:peptidase activity"/>
    <property type="evidence" value="ECO:0000314"/>
    <property type="project" value="UniProtKB"/>
</dbReference>
<dbReference type="GO" id="GO:0004252">
    <property type="term" value="F:serine-type endopeptidase activity"/>
    <property type="evidence" value="ECO:0007669"/>
    <property type="project" value="InterPro"/>
</dbReference>
<dbReference type="GO" id="GO:0016485">
    <property type="term" value="P:protein processing"/>
    <property type="evidence" value="ECO:0000314"/>
    <property type="project" value="UniProtKB"/>
</dbReference>
<dbReference type="CDD" id="cd00190">
    <property type="entry name" value="Tryp_SPc"/>
    <property type="match status" value="1"/>
</dbReference>
<dbReference type="FunFam" id="3.30.1640.30:FF:000001">
    <property type="entry name" value="Serine protease 7"/>
    <property type="match status" value="1"/>
</dbReference>
<dbReference type="FunFam" id="2.40.10.10:FF:000028">
    <property type="entry name" value="Serine protease easter"/>
    <property type="match status" value="1"/>
</dbReference>
<dbReference type="FunFam" id="2.40.10.10:FF:000078">
    <property type="entry name" value="Serine protease H137"/>
    <property type="match status" value="1"/>
</dbReference>
<dbReference type="Gene3D" id="3.30.1640.30">
    <property type="match status" value="2"/>
</dbReference>
<dbReference type="Gene3D" id="2.40.10.10">
    <property type="entry name" value="Trypsin-like serine proteases"/>
    <property type="match status" value="2"/>
</dbReference>
<dbReference type="InterPro" id="IPR022700">
    <property type="entry name" value="CLIP"/>
</dbReference>
<dbReference type="InterPro" id="IPR038565">
    <property type="entry name" value="CLIP_sf"/>
</dbReference>
<dbReference type="InterPro" id="IPR009003">
    <property type="entry name" value="Peptidase_S1_PA"/>
</dbReference>
<dbReference type="InterPro" id="IPR043504">
    <property type="entry name" value="Peptidase_S1_PA_chymotrypsin"/>
</dbReference>
<dbReference type="InterPro" id="IPR001314">
    <property type="entry name" value="Peptidase_S1A"/>
</dbReference>
<dbReference type="InterPro" id="IPR051487">
    <property type="entry name" value="Ser/Thr_Proteases_Immune/Dev"/>
</dbReference>
<dbReference type="InterPro" id="IPR001254">
    <property type="entry name" value="Trypsin_dom"/>
</dbReference>
<dbReference type="InterPro" id="IPR018114">
    <property type="entry name" value="TRYPSIN_HIS"/>
</dbReference>
<dbReference type="InterPro" id="IPR033116">
    <property type="entry name" value="TRYPSIN_SER"/>
</dbReference>
<dbReference type="PANTHER" id="PTHR24256">
    <property type="entry name" value="TRYPTASE-RELATED"/>
    <property type="match status" value="1"/>
</dbReference>
<dbReference type="Pfam" id="PF12032">
    <property type="entry name" value="CLIP"/>
    <property type="match status" value="2"/>
</dbReference>
<dbReference type="Pfam" id="PF00089">
    <property type="entry name" value="Trypsin"/>
    <property type="match status" value="1"/>
</dbReference>
<dbReference type="PRINTS" id="PR00722">
    <property type="entry name" value="CHYMOTRYPSIN"/>
</dbReference>
<dbReference type="SMART" id="SM00680">
    <property type="entry name" value="CLIP"/>
    <property type="match status" value="2"/>
</dbReference>
<dbReference type="SMART" id="SM00020">
    <property type="entry name" value="Tryp_SPc"/>
    <property type="match status" value="1"/>
</dbReference>
<dbReference type="SUPFAM" id="SSF50494">
    <property type="entry name" value="Trypsin-like serine proteases"/>
    <property type="match status" value="1"/>
</dbReference>
<dbReference type="PROSITE" id="PS51888">
    <property type="entry name" value="CLIP"/>
    <property type="match status" value="2"/>
</dbReference>
<dbReference type="PROSITE" id="PS50240">
    <property type="entry name" value="TRYPSIN_DOM"/>
    <property type="match status" value="1"/>
</dbReference>
<dbReference type="PROSITE" id="PS00134">
    <property type="entry name" value="TRYPSIN_HIS"/>
    <property type="match status" value="1"/>
</dbReference>
<dbReference type="PROSITE" id="PS00135">
    <property type="entry name" value="TRYPSIN_SER"/>
    <property type="match status" value="1"/>
</dbReference>
<comment type="function">
    <text evidence="6 7 8 9 12">Endopeptidase with selective post-Arg cleavage site (PubMed:10066809, PubMed:4197814, PubMed:4197815, PubMed:7981662). Activates prophenoloxidase (PubMed:4197814, PubMed:4197815). Has a probable role in the melanization process as part of the innate immune response (Probable).</text>
</comment>
<comment type="activity regulation">
    <text evidence="7 8 9">Stabilized by calcium (PubMed:4197814). Inhibited by di-isopropyl phosphorofluoridate (DFP), phenylmethanesulfonylfluoride (PMSF), p-nitrophenyl-p'-guanidinobenzonate (p-NPGB), p-chloromercuribenzoate (PCMB), ethylenediaminetetraacetic acid (EDTA), urea and CI-13c (PubMed:4197814, PubMed:4197815, PubMed:7981662).</text>
</comment>
<comment type="biophysicochemical properties">
    <kinetics>
        <KM evidence="7 8">2.2 uM for prophenoloxidase (at pH 7.6 and 0 degrees Celsius)</KM>
        <KM evidence="8">1.43 mM for N-benzoyl-L-arginine ethyl ester hydrochloride (BAEE) (in the absence of KCl)</KM>
        <KM evidence="8">0.77 mM for N-benzoyl-L-arginine ethyl ester hydrochloride (BAEE) (in the presence of 0.025 M KCl)</KM>
        <KM evidence="6">1.2 mM for N-benzoyl-L-arginine ethyl ester hydrochloride (BAEE) (in the presence of 0.004 M KCl)</KM>
        <KM evidence="6">0.35 mM for N-benzoyl-L-arginine ethyl ester hydrochloride (BAEE) (in the presence of 0.5 M KCl)</KM>
        <KM evidence="8">0.145 mM for N-benzoyl-L-arginine ethyl ester hydrochloride (BAEE) (in the presence of 0.5 M KCl)</KM>
        <KM evidence="8">0.709 mM for N-p-tosyl-L-arginine methyl ester hydrochloride (TAME) (in the presence of 0.5 M KCl)</KM>
    </kinetics>
    <phDependence>
        <text evidence="6">Optimum pH is 6.0-8.5.</text>
    </phDependence>
    <temperatureDependence>
        <text evidence="6">Optimum temperature is 0-25 degrees Celsius.</text>
    </temperatureDependence>
</comment>
<comment type="subunit">
    <text evidence="13">In the active form, heterodimer of a light chain and a heavy chain; disulfide-linked.</text>
</comment>
<comment type="developmental stage">
    <text evidence="6 7 8 9">Expressed in eggs and larval cuticles (at protein level) (PubMed:10066809, PubMed:4197814, PubMed:4197815, PubMed:7981662). Expressed in larval hemocytes and salivary glands (PubMed:10066809).</text>
</comment>
<comment type="domain">
    <text evidence="5">The clip domain consists of 35-55 residues which are 'knitted' together usually by 3 conserved disulfide bonds forming a clip-like compact structure.</text>
</comment>
<comment type="PTM">
    <text evidence="6 13">Proteolytically cleaved for activation (PubMed:10066809). Cleavage produces a light chain and a catalytic heavy chain which remains covalently associated probably through an interchain disulfide bond (Probable).</text>
</comment>
<comment type="PTM">
    <text evidence="6">Glycosylated.</text>
</comment>
<comment type="mass spectrometry">
    <molecule>Phenoloxidase-activating enzyme heavy chain</molecule>
</comment>
<comment type="similarity">
    <text evidence="5">Belongs to the peptidase S1 family. CLIP subfamily.</text>
</comment>
<organism evidence="14">
    <name type="scientific">Bombyx mori</name>
    <name type="common">Silk moth</name>
    <dbReference type="NCBI Taxonomy" id="7091"/>
    <lineage>
        <taxon>Eukaryota</taxon>
        <taxon>Metazoa</taxon>
        <taxon>Ecdysozoa</taxon>
        <taxon>Arthropoda</taxon>
        <taxon>Hexapoda</taxon>
        <taxon>Insecta</taxon>
        <taxon>Pterygota</taxon>
        <taxon>Neoptera</taxon>
        <taxon>Endopterygota</taxon>
        <taxon>Lepidoptera</taxon>
        <taxon>Glossata</taxon>
        <taxon>Ditrysia</taxon>
        <taxon>Bombycoidea</taxon>
        <taxon>Bombycidae</taxon>
        <taxon>Bombycinae</taxon>
        <taxon>Bombyx</taxon>
    </lineage>
</organism>
<keyword id="KW-0106">Calcium</keyword>
<keyword id="KW-0903">Direct protein sequencing</keyword>
<keyword id="KW-1015">Disulfide bond</keyword>
<keyword id="KW-0325">Glycoprotein</keyword>
<keyword id="KW-0378">Hydrolase</keyword>
<keyword id="KW-0479">Metal-binding</keyword>
<keyword id="KW-0645">Protease</keyword>
<keyword id="KW-0873">Pyrrolidone carboxylic acid</keyword>
<keyword id="KW-1185">Reference proteome</keyword>
<keyword id="KW-0720">Serine protease</keyword>
<keyword id="KW-0732">Signal</keyword>
<keyword id="KW-0865">Zymogen</keyword>
<proteinExistence type="evidence at protein level"/>
<sequence>MFLIWTFIVAVLAIQTKSVVAQSCRTPNGLNGNCVSVYECQALLAILNNQRRTQQDEKFLRDSQCGTKNSVPAVCCPCNAADGQQGNCVNINSCPYVLQLLKNPNEANLNYVRGSVCQGSEQQSICCVTAPQSTAVTTTPRPKRVHACQSEMTATPPNPEGKCCGRDIAVGDKIVGGAPASIDSYPWLVVIEYVRLERTMLLCGGALISGKYVLTAGHCVKGAILDVGTPKTVRLGEYNTTNPGRDCVSVSAGGTDCTDPLVKIGIEKTIPHPDYQPYHFLRKHDIGLIRLQSIAPFTDFIRPICLPSTDYTVNPPSKFALTVAGWGRYLQFDNGTVRSSKIKLHVTLPFVQRDVCEANQKPLRNGQRITLWKGQMCAGGEAGKDSCKGDSGGPLMYEHSKKYEAVGIVSFGPEKCGQIDIPGVYTNVYEYLPWIQNTIEP</sequence>
<name>PPAE_BOMMO</name>
<gene>
    <name evidence="11" type="primary">PPAE</name>
</gene>
<evidence type="ECO:0000250" key="1">
    <source>
        <dbReference type="UniProtKB" id="O97366"/>
    </source>
</evidence>
<evidence type="ECO:0000250" key="2">
    <source>
        <dbReference type="UniProtKB" id="Q9VB68"/>
    </source>
</evidence>
<evidence type="ECO:0000255" key="3">
    <source>
        <dbReference type="PROSITE-ProRule" id="PRU00274"/>
    </source>
</evidence>
<evidence type="ECO:0000255" key="4">
    <source>
        <dbReference type="PROSITE-ProRule" id="PRU00498"/>
    </source>
</evidence>
<evidence type="ECO:0000255" key="5">
    <source>
        <dbReference type="PROSITE-ProRule" id="PRU01236"/>
    </source>
</evidence>
<evidence type="ECO:0000269" key="6">
    <source>
    </source>
</evidence>
<evidence type="ECO:0000269" key="7">
    <source>
    </source>
</evidence>
<evidence type="ECO:0000269" key="8">
    <source>
    </source>
</evidence>
<evidence type="ECO:0000269" key="9">
    <source>
    </source>
</evidence>
<evidence type="ECO:0000303" key="10">
    <source>
    </source>
</evidence>
<evidence type="ECO:0000303" key="11">
    <source>
    </source>
</evidence>
<evidence type="ECO:0000305" key="12"/>
<evidence type="ECO:0000305" key="13">
    <source>
    </source>
</evidence>
<evidence type="ECO:0000312" key="14">
    <source>
        <dbReference type="EMBL" id="BAA76308.1"/>
    </source>
</evidence>
<reference evidence="14" key="1">
    <citation type="journal article" date="1999" name="J. Biol. Chem.">
        <title>Prophenoloxidase-activating enzyme of the silkworm, Bombyx mori. Purification, characterization, and cDNA cloning.</title>
        <authorList>
            <person name="Satoh D."/>
            <person name="Horii A."/>
            <person name="Ochiai M."/>
            <person name="Ashida M."/>
        </authorList>
    </citation>
    <scope>NUCLEOTIDE SEQUENCE [MRNA]</scope>
    <scope>PROTEIN SEQUENCE OF 22-32 AND 174-189</scope>
    <scope>FUNCTION</scope>
    <scope>CATALYTIC ACTIVITY</scope>
    <scope>BIOPHYSICOCHEMICAL PROPERTIES</scope>
    <scope>SUBUNIT</scope>
    <scope>DEVELOPMENTAL STAGE</scope>
    <scope>GLYCOSYLATION</scope>
    <scope>PROTEOLYTIC CLEAVAGE</scope>
    <scope>MASS SPECTROMETRY</scope>
    <scope>DISULFIDE BONDS</scope>
    <scope>PYROGLUTAMATE FORMATION AT GLN-22</scope>
    <source>
        <tissue evidence="14">Integument</tissue>
    </source>
</reference>
<reference key="2">
    <citation type="journal article" date="2008" name="Insect Biochem. Mol. Biol.">
        <title>The genome of a lepidopteran model insect, the silkworm Bombyx mori.</title>
        <authorList>
            <consortium name="International Silkworm Genome Consortium"/>
        </authorList>
    </citation>
    <scope>NUCLEOTIDE SEQUENCE [LARGE SCALE GENOMIC DNA]</scope>
    <source>
        <strain>p50T</strain>
    </source>
</reference>
<reference evidence="12" key="3">
    <citation type="journal article" date="1973" name="Arch. Biochem. Biophys.">
        <title>Studies on prephenoloxidase-activating enzyme from cuticle of the silkworm Bombyx mori. I. Activation reaction by the enzyme.</title>
        <authorList>
            <person name="Dohke K."/>
        </authorList>
    </citation>
    <scope>FUNCTION</scope>
    <scope>CATALYTIC ACTIVITY</scope>
    <scope>ACTIVITY REGULATION</scope>
    <scope>BIOPHYSICOCHEMICAL PROPERTIES</scope>
    <scope>DEVELOPMENTAL STAGE</scope>
</reference>
<reference evidence="12" key="4">
    <citation type="journal article" date="1973" name="Arch. Biochem. Biophys.">
        <title>Studies on prephenoloxidase-activating enzyme from cuticle of the silkworm Bombyx mori. II. Purification and characterization of the enzyme.</title>
        <authorList>
            <person name="Dohke K."/>
        </authorList>
    </citation>
    <scope>FUNCTION</scope>
    <scope>CATALYTIC ACTIVITY</scope>
    <scope>ACTIVITY REGULATION</scope>
    <scope>BIOPHYSICOCHEMICAL PROPERTIES</scope>
    <scope>DEVELOPMENTAL STAGE</scope>
</reference>
<reference evidence="12" key="5">
    <citation type="journal article" date="1994" name="Biochem. Mol. Biol. Int.">
        <title>Inhibition of prophenoloxidase-activating enzyme from Bombyx mori by endogenous chymotrypsin inhibitors.</title>
        <authorList>
            <person name="Aso Y."/>
            <person name="Yamashita T."/>
            <person name="Meno K."/>
            <person name="Murakami M."/>
        </authorList>
    </citation>
    <scope>FUNCTION</scope>
    <scope>CATALYTIC ACTIVITY</scope>
    <scope>ACTIVITY REGULATION</scope>
    <scope>DEVELOPMENTAL STAGE</scope>
</reference>
<feature type="signal peptide" evidence="6">
    <location>
        <begin position="1"/>
        <end position="21"/>
    </location>
</feature>
<feature type="chain" id="PRO_5004338749" description="Phenoloxidase-activating enzyme light chain" evidence="13">
    <location>
        <begin position="22"/>
        <end position="173"/>
    </location>
</feature>
<feature type="chain" id="PRO_0000443318" description="Phenoloxidase-activating enzyme heavy chain" evidence="13">
    <location>
        <begin position="174"/>
        <end position="441"/>
    </location>
</feature>
<feature type="domain" description="Clip 1" evidence="5 10">
    <location>
        <begin position="23"/>
        <end position="76"/>
    </location>
</feature>
<feature type="domain" description="Clip 2" evidence="5 10">
    <location>
        <begin position="77"/>
        <end position="127"/>
    </location>
</feature>
<feature type="domain" description="Peptidase S1" evidence="3">
    <location>
        <begin position="174"/>
        <end position="440"/>
    </location>
</feature>
<feature type="active site" description="Charge relay system" evidence="3">
    <location>
        <position position="218"/>
    </location>
</feature>
<feature type="active site" description="Charge relay system" evidence="3">
    <location>
        <position position="285"/>
    </location>
</feature>
<feature type="active site" description="Charge relay system" evidence="3">
    <location>
        <position position="391"/>
    </location>
</feature>
<feature type="binding site" evidence="1">
    <location>
        <position position="237"/>
    </location>
    <ligand>
        <name>Ca(2+)</name>
        <dbReference type="ChEBI" id="CHEBI:29108"/>
    </ligand>
</feature>
<feature type="binding site" evidence="1">
    <location>
        <position position="239"/>
    </location>
    <ligand>
        <name>Ca(2+)</name>
        <dbReference type="ChEBI" id="CHEBI:29108"/>
    </ligand>
</feature>
<feature type="binding site" evidence="1">
    <location>
        <position position="242"/>
    </location>
    <ligand>
        <name>Ca(2+)</name>
        <dbReference type="ChEBI" id="CHEBI:29108"/>
    </ligand>
</feature>
<feature type="binding site" evidence="1">
    <location>
        <position position="246"/>
    </location>
    <ligand>
        <name>Ca(2+)</name>
        <dbReference type="ChEBI" id="CHEBI:29108"/>
    </ligand>
</feature>
<feature type="site" description="Cleavage" evidence="6">
    <location>
        <begin position="173"/>
        <end position="174"/>
    </location>
</feature>
<feature type="modified residue" description="Pyrrolidone carboxylic acid" evidence="6">
    <location>
        <position position="22"/>
    </location>
</feature>
<feature type="glycosylation site" description="N-linked (GlcNAc...) asparagine" evidence="4">
    <location>
        <position position="239"/>
    </location>
</feature>
<feature type="glycosylation site" description="N-linked (GlcNAc...) asparagine" evidence="4">
    <location>
        <position position="334"/>
    </location>
</feature>
<feature type="disulfide bond" evidence="5 10">
    <location>
        <begin position="24"/>
        <end position="75"/>
    </location>
</feature>
<feature type="disulfide bond" evidence="5 10">
    <location>
        <begin position="34"/>
        <end position="65"/>
    </location>
</feature>
<feature type="disulfide bond" evidence="5 10">
    <location>
        <begin position="40"/>
        <end position="76"/>
    </location>
</feature>
<feature type="disulfide bond" evidence="5 10">
    <location>
        <begin position="78"/>
        <end position="126"/>
    </location>
</feature>
<feature type="disulfide bond" evidence="5 10">
    <location>
        <begin position="88"/>
        <end position="117"/>
    </location>
</feature>
<feature type="disulfide bond" evidence="5 10">
    <location>
        <begin position="94"/>
        <end position="127"/>
    </location>
</feature>
<feature type="disulfide bond" description="Interchain (between light and heavy chains)" evidence="2">
    <location>
        <begin position="164"/>
        <end position="305"/>
    </location>
</feature>
<feature type="disulfide bond" evidence="2">
    <location>
        <begin position="203"/>
        <end position="219"/>
    </location>
</feature>
<feature type="disulfide bond" evidence="2">
    <location>
        <begin position="356"/>
        <end position="377"/>
    </location>
</feature>
<feature type="disulfide bond" evidence="2">
    <location>
        <begin position="387"/>
        <end position="416"/>
    </location>
</feature>
<feature type="sequence conflict" description="In Ref. 1; BAA76308." evidence="12" ref="1">
    <original>A</original>
    <variation>G</variation>
    <location>
        <position position="223"/>
    </location>
</feature>
<accession>Q9XXV0</accession>
<accession>H9JW33</accession>